<accession>Q9K1G0</accession>
<name>MNMG_NEIMB</name>
<proteinExistence type="inferred from homology"/>
<feature type="chain" id="PRO_0000117141" description="tRNA uridine 5-carboxymethylaminomethyl modification enzyme MnmG">
    <location>
        <begin position="1"/>
        <end position="628"/>
    </location>
</feature>
<feature type="binding site" evidence="1">
    <location>
        <begin position="13"/>
        <end position="18"/>
    </location>
    <ligand>
        <name>FAD</name>
        <dbReference type="ChEBI" id="CHEBI:57692"/>
    </ligand>
</feature>
<feature type="binding site" evidence="1">
    <location>
        <begin position="273"/>
        <end position="287"/>
    </location>
    <ligand>
        <name>NAD(+)</name>
        <dbReference type="ChEBI" id="CHEBI:57540"/>
    </ligand>
</feature>
<protein>
    <recommendedName>
        <fullName evidence="1">tRNA uridine 5-carboxymethylaminomethyl modification enzyme MnmG</fullName>
    </recommendedName>
    <alternativeName>
        <fullName evidence="1">Glucose-inhibited division protein A</fullName>
    </alternativeName>
</protein>
<evidence type="ECO:0000255" key="1">
    <source>
        <dbReference type="HAMAP-Rule" id="MF_00129"/>
    </source>
</evidence>
<evidence type="ECO:0000305" key="2"/>
<gene>
    <name evidence="1" type="primary">mnmG</name>
    <name evidence="1" type="synonym">gidA</name>
    <name type="ordered locus">NMB0193</name>
</gene>
<comment type="function">
    <text evidence="1">NAD-binding protein involved in the addition of a carboxymethylaminomethyl (cmnm) group at the wobble position (U34) of certain tRNAs, forming tRNA-cmnm(5)s(2)U34.</text>
</comment>
<comment type="cofactor">
    <cofactor evidence="1">
        <name>FAD</name>
        <dbReference type="ChEBI" id="CHEBI:57692"/>
    </cofactor>
</comment>
<comment type="subunit">
    <text evidence="1">Homodimer. Heterotetramer of two MnmE and two MnmG subunits.</text>
</comment>
<comment type="subcellular location">
    <subcellularLocation>
        <location evidence="1">Cytoplasm</location>
    </subcellularLocation>
</comment>
<comment type="similarity">
    <text evidence="1">Belongs to the MnmG family.</text>
</comment>
<comment type="sequence caution" evidence="2">
    <conflict type="erroneous initiation">
        <sequence resource="EMBL-CDS" id="AAF40650"/>
    </conflict>
</comment>
<keyword id="KW-0963">Cytoplasm</keyword>
<keyword id="KW-0274">FAD</keyword>
<keyword id="KW-0285">Flavoprotein</keyword>
<keyword id="KW-0520">NAD</keyword>
<keyword id="KW-1185">Reference proteome</keyword>
<keyword id="KW-0819">tRNA processing</keyword>
<reference key="1">
    <citation type="journal article" date="2000" name="Science">
        <title>Complete genome sequence of Neisseria meningitidis serogroup B strain MC58.</title>
        <authorList>
            <person name="Tettelin H."/>
            <person name="Saunders N.J."/>
            <person name="Heidelberg J.F."/>
            <person name="Jeffries A.C."/>
            <person name="Nelson K.E."/>
            <person name="Eisen J.A."/>
            <person name="Ketchum K.A."/>
            <person name="Hood D.W."/>
            <person name="Peden J.F."/>
            <person name="Dodson R.J."/>
            <person name="Nelson W.C."/>
            <person name="Gwinn M.L."/>
            <person name="DeBoy R.T."/>
            <person name="Peterson J.D."/>
            <person name="Hickey E.K."/>
            <person name="Haft D.H."/>
            <person name="Salzberg S.L."/>
            <person name="White O."/>
            <person name="Fleischmann R.D."/>
            <person name="Dougherty B.A."/>
            <person name="Mason T.M."/>
            <person name="Ciecko A."/>
            <person name="Parksey D.S."/>
            <person name="Blair E."/>
            <person name="Cittone H."/>
            <person name="Clark E.B."/>
            <person name="Cotton M.D."/>
            <person name="Utterback T.R."/>
            <person name="Khouri H.M."/>
            <person name="Qin H."/>
            <person name="Vamathevan J.J."/>
            <person name="Gill J."/>
            <person name="Scarlato V."/>
            <person name="Masignani V."/>
            <person name="Pizza M."/>
            <person name="Grandi G."/>
            <person name="Sun L."/>
            <person name="Smith H.O."/>
            <person name="Fraser C.M."/>
            <person name="Moxon E.R."/>
            <person name="Rappuoli R."/>
            <person name="Venter J.C."/>
        </authorList>
    </citation>
    <scope>NUCLEOTIDE SEQUENCE [LARGE SCALE GENOMIC DNA]</scope>
    <source>
        <strain>ATCC BAA-335 / MC58</strain>
    </source>
</reference>
<sequence>MIYPKTYDVIVVGGGHAGTEAALAAARMGAQTLLLSHNIETLGQMSCNPSIGGIGKGHLVRELDALGGAMALATDKSGIQFRRLNASKGAAVRATRAQADRILYKAAIREMLENQENLDLFQQAVEDVTLDGERISGVITAMGVEFKARAVVLTAGTFLSGKIHIGLENYEGGRAGDPAAKSLGGRLRELKLPQGRLKTGTPPRIDGRTIDFSQLTEQPGDTPVPVMSVRGNADMHPRQVSCWITHTNTQTHDIIRSGFDRSPMFTGKIEGVGPRYCPSIEDKINRFADKDSHQIFLEPEGLTTHEYYPNGISTSLPFDIQIALVRSMKGLENAHILRPGYAIEYDYFDPRNLKASLETKTIAGLFFAGQINGTTGYEEAAAQGLLAGANAVQYVRGQDPLLLRREQAYLGVLVDDLITKGVNEPYRMFTSRAEYRLQLREDNADMRLTEDGYKIGLVSEAQWRMFNEKREAVEREIQRLKTTWYTPQKLAEGEQIRVFGQKLSREANLHDLLRRPNLDYAALMTLEGAMPSENLSAEVIEQVEIQVKYQGYIDRQNEEIDSRRDIETLKLPDGIDYGKVKGLSAEVQQKLNQHKPETVGQASRISGVTPAAVALLMVHLKRGFKDAK</sequence>
<organism>
    <name type="scientific">Neisseria meningitidis serogroup B (strain ATCC BAA-335 / MC58)</name>
    <dbReference type="NCBI Taxonomy" id="122586"/>
    <lineage>
        <taxon>Bacteria</taxon>
        <taxon>Pseudomonadati</taxon>
        <taxon>Pseudomonadota</taxon>
        <taxon>Betaproteobacteria</taxon>
        <taxon>Neisseriales</taxon>
        <taxon>Neisseriaceae</taxon>
        <taxon>Neisseria</taxon>
    </lineage>
</organism>
<dbReference type="EMBL" id="AE002098">
    <property type="protein sequence ID" value="AAF40650.1"/>
    <property type="status" value="ALT_INIT"/>
    <property type="molecule type" value="Genomic_DNA"/>
</dbReference>
<dbReference type="PIR" id="F81227">
    <property type="entry name" value="F81227"/>
</dbReference>
<dbReference type="RefSeq" id="NP_273251.1">
    <property type="nucleotide sequence ID" value="NC_003112.2"/>
</dbReference>
<dbReference type="SMR" id="Q9K1G0"/>
<dbReference type="FunCoup" id="Q9K1G0">
    <property type="interactions" value="528"/>
</dbReference>
<dbReference type="STRING" id="122586.NMB0193"/>
<dbReference type="PaxDb" id="122586-NMB0193"/>
<dbReference type="KEGG" id="nme:NMB0193"/>
<dbReference type="PATRIC" id="fig|122586.8.peg.238"/>
<dbReference type="HOGENOM" id="CLU_007831_2_2_4"/>
<dbReference type="InParanoid" id="Q9K1G0"/>
<dbReference type="OrthoDB" id="9815560at2"/>
<dbReference type="Proteomes" id="UP000000425">
    <property type="component" value="Chromosome"/>
</dbReference>
<dbReference type="GO" id="GO:0005829">
    <property type="term" value="C:cytosol"/>
    <property type="evidence" value="ECO:0000318"/>
    <property type="project" value="GO_Central"/>
</dbReference>
<dbReference type="GO" id="GO:0050660">
    <property type="term" value="F:flavin adenine dinucleotide binding"/>
    <property type="evidence" value="ECO:0000318"/>
    <property type="project" value="GO_Central"/>
</dbReference>
<dbReference type="GO" id="GO:0030488">
    <property type="term" value="P:tRNA methylation"/>
    <property type="evidence" value="ECO:0000318"/>
    <property type="project" value="GO_Central"/>
</dbReference>
<dbReference type="GO" id="GO:0002098">
    <property type="term" value="P:tRNA wobble uridine modification"/>
    <property type="evidence" value="ECO:0000318"/>
    <property type="project" value="GO_Central"/>
</dbReference>
<dbReference type="FunFam" id="1.10.10.1800:FF:000001">
    <property type="entry name" value="tRNA uridine 5-carboxymethylaminomethyl modification enzyme MnmG"/>
    <property type="match status" value="1"/>
</dbReference>
<dbReference type="FunFam" id="1.10.150.570:FF:000001">
    <property type="entry name" value="tRNA uridine 5-carboxymethylaminomethyl modification enzyme MnmG"/>
    <property type="match status" value="1"/>
</dbReference>
<dbReference type="FunFam" id="3.50.50.60:FF:000002">
    <property type="entry name" value="tRNA uridine 5-carboxymethylaminomethyl modification enzyme MnmG"/>
    <property type="match status" value="1"/>
</dbReference>
<dbReference type="FunFam" id="3.50.50.60:FF:000010">
    <property type="entry name" value="tRNA uridine 5-carboxymethylaminomethyl modification enzyme MnmG"/>
    <property type="match status" value="1"/>
</dbReference>
<dbReference type="Gene3D" id="3.50.50.60">
    <property type="entry name" value="FAD/NAD(P)-binding domain"/>
    <property type="match status" value="2"/>
</dbReference>
<dbReference type="Gene3D" id="1.10.150.570">
    <property type="entry name" value="GidA associated domain, C-terminal subdomain"/>
    <property type="match status" value="1"/>
</dbReference>
<dbReference type="Gene3D" id="1.10.10.1800">
    <property type="entry name" value="tRNA uridine 5-carboxymethylaminomethyl modification enzyme MnmG/GidA"/>
    <property type="match status" value="1"/>
</dbReference>
<dbReference type="HAMAP" id="MF_00129">
    <property type="entry name" value="MnmG_GidA"/>
    <property type="match status" value="1"/>
</dbReference>
<dbReference type="InterPro" id="IPR036188">
    <property type="entry name" value="FAD/NAD-bd_sf"/>
</dbReference>
<dbReference type="InterPro" id="IPR049312">
    <property type="entry name" value="GIDA_C_N"/>
</dbReference>
<dbReference type="InterPro" id="IPR004416">
    <property type="entry name" value="MnmG"/>
</dbReference>
<dbReference type="InterPro" id="IPR002218">
    <property type="entry name" value="MnmG-rel"/>
</dbReference>
<dbReference type="InterPro" id="IPR020595">
    <property type="entry name" value="MnmG-rel_CS"/>
</dbReference>
<dbReference type="InterPro" id="IPR026904">
    <property type="entry name" value="MnmG_C"/>
</dbReference>
<dbReference type="InterPro" id="IPR047001">
    <property type="entry name" value="MnmG_C_subdom"/>
</dbReference>
<dbReference type="InterPro" id="IPR044920">
    <property type="entry name" value="MnmG_C_subdom_sf"/>
</dbReference>
<dbReference type="InterPro" id="IPR040131">
    <property type="entry name" value="MnmG_N"/>
</dbReference>
<dbReference type="NCBIfam" id="TIGR00136">
    <property type="entry name" value="mnmG_gidA"/>
    <property type="match status" value="1"/>
</dbReference>
<dbReference type="PANTHER" id="PTHR11806">
    <property type="entry name" value="GLUCOSE INHIBITED DIVISION PROTEIN A"/>
    <property type="match status" value="1"/>
</dbReference>
<dbReference type="PANTHER" id="PTHR11806:SF0">
    <property type="entry name" value="PROTEIN MTO1 HOMOLOG, MITOCHONDRIAL"/>
    <property type="match status" value="1"/>
</dbReference>
<dbReference type="Pfam" id="PF01134">
    <property type="entry name" value="GIDA"/>
    <property type="match status" value="1"/>
</dbReference>
<dbReference type="Pfam" id="PF21680">
    <property type="entry name" value="GIDA_C_1st"/>
    <property type="match status" value="1"/>
</dbReference>
<dbReference type="Pfam" id="PF13932">
    <property type="entry name" value="SAM_GIDA_C"/>
    <property type="match status" value="1"/>
</dbReference>
<dbReference type="SMART" id="SM01228">
    <property type="entry name" value="GIDA_assoc_3"/>
    <property type="match status" value="1"/>
</dbReference>
<dbReference type="SUPFAM" id="SSF51905">
    <property type="entry name" value="FAD/NAD(P)-binding domain"/>
    <property type="match status" value="1"/>
</dbReference>
<dbReference type="PROSITE" id="PS01280">
    <property type="entry name" value="GIDA_1"/>
    <property type="match status" value="1"/>
</dbReference>
<dbReference type="PROSITE" id="PS01281">
    <property type="entry name" value="GIDA_2"/>
    <property type="match status" value="1"/>
</dbReference>